<accession>Q9SIZ3</accession>
<accession>Q9XEF5</accession>
<comment type="subcellular location">
    <subcellularLocation>
        <location evidence="2">Golgi apparatus membrane</location>
        <topology evidence="2">Single-pass type II membrane protein</topology>
    </subcellularLocation>
</comment>
<comment type="similarity">
    <text evidence="2">Belongs to the methyltransferase superfamily.</text>
</comment>
<dbReference type="EC" id="2.1.1.-"/>
<dbReference type="EMBL" id="AF085279">
    <property type="protein sequence ID" value="AAD25943.1"/>
    <property type="molecule type" value="Genomic_DNA"/>
</dbReference>
<dbReference type="EMBL" id="AC007020">
    <property type="protein sequence ID" value="AAD25663.2"/>
    <property type="molecule type" value="Genomic_DNA"/>
</dbReference>
<dbReference type="EMBL" id="CP002685">
    <property type="protein sequence ID" value="AEC09806.1"/>
    <property type="molecule type" value="Genomic_DNA"/>
</dbReference>
<dbReference type="EMBL" id="AY059871">
    <property type="protein sequence ID" value="AAL24353.1"/>
    <property type="molecule type" value="mRNA"/>
</dbReference>
<dbReference type="EMBL" id="AY093322">
    <property type="protein sequence ID" value="AAM13321.1"/>
    <property type="molecule type" value="mRNA"/>
</dbReference>
<dbReference type="PIR" id="E84827">
    <property type="entry name" value="E84827"/>
</dbReference>
<dbReference type="RefSeq" id="NP_565926.1">
    <property type="nucleotide sequence ID" value="NM_129586.3"/>
</dbReference>
<dbReference type="FunCoup" id="Q9SIZ3">
    <property type="interactions" value="1221"/>
</dbReference>
<dbReference type="STRING" id="3702.Q9SIZ3"/>
<dbReference type="GlyGen" id="Q9SIZ3">
    <property type="glycosylation" value="3 sites"/>
</dbReference>
<dbReference type="PaxDb" id="3702-AT2G40280.1"/>
<dbReference type="ProteomicsDB" id="234885"/>
<dbReference type="EnsemblPlants" id="AT2G40280.1">
    <property type="protein sequence ID" value="AT2G40280.1"/>
    <property type="gene ID" value="AT2G40280"/>
</dbReference>
<dbReference type="GeneID" id="818620"/>
<dbReference type="Gramene" id="AT2G40280.1">
    <property type="protein sequence ID" value="AT2G40280.1"/>
    <property type="gene ID" value="AT2G40280"/>
</dbReference>
<dbReference type="KEGG" id="ath:AT2G40280"/>
<dbReference type="Araport" id="AT2G40280"/>
<dbReference type="TAIR" id="AT2G40280"/>
<dbReference type="eggNOG" id="ENOG502QQAS">
    <property type="taxonomic scope" value="Eukaryota"/>
</dbReference>
<dbReference type="HOGENOM" id="CLU_010485_2_2_1"/>
<dbReference type="InParanoid" id="Q9SIZ3"/>
<dbReference type="OMA" id="HCPEPSP"/>
<dbReference type="PhylomeDB" id="Q9SIZ3"/>
<dbReference type="PRO" id="PR:Q9SIZ3"/>
<dbReference type="Proteomes" id="UP000006548">
    <property type="component" value="Chromosome 2"/>
</dbReference>
<dbReference type="ExpressionAtlas" id="Q9SIZ3">
    <property type="expression patterns" value="baseline and differential"/>
</dbReference>
<dbReference type="GO" id="GO:0005768">
    <property type="term" value="C:endosome"/>
    <property type="evidence" value="ECO:0007005"/>
    <property type="project" value="TAIR"/>
</dbReference>
<dbReference type="GO" id="GO:0005794">
    <property type="term" value="C:Golgi apparatus"/>
    <property type="evidence" value="ECO:0007005"/>
    <property type="project" value="TAIR"/>
</dbReference>
<dbReference type="GO" id="GO:0000137">
    <property type="term" value="C:Golgi cis cisterna"/>
    <property type="evidence" value="ECO:0007005"/>
    <property type="project" value="TAIR"/>
</dbReference>
<dbReference type="GO" id="GO:0000139">
    <property type="term" value="C:Golgi membrane"/>
    <property type="evidence" value="ECO:0007669"/>
    <property type="project" value="UniProtKB-SubCell"/>
</dbReference>
<dbReference type="GO" id="GO:0005802">
    <property type="term" value="C:trans-Golgi network"/>
    <property type="evidence" value="ECO:0007005"/>
    <property type="project" value="TAIR"/>
</dbReference>
<dbReference type="GO" id="GO:0008168">
    <property type="term" value="F:methyltransferase activity"/>
    <property type="evidence" value="ECO:0007669"/>
    <property type="project" value="UniProtKB-KW"/>
</dbReference>
<dbReference type="GO" id="GO:0032259">
    <property type="term" value="P:methylation"/>
    <property type="evidence" value="ECO:0007669"/>
    <property type="project" value="UniProtKB-KW"/>
</dbReference>
<dbReference type="CDD" id="cd02440">
    <property type="entry name" value="AdoMet_MTases"/>
    <property type="match status" value="1"/>
</dbReference>
<dbReference type="FunFam" id="3.40.50.150:FF:000084">
    <property type="entry name" value="probable methyltransferase PMT23"/>
    <property type="match status" value="1"/>
</dbReference>
<dbReference type="Gene3D" id="3.40.50.150">
    <property type="entry name" value="Vaccinia Virus protein VP39"/>
    <property type="match status" value="2"/>
</dbReference>
<dbReference type="InterPro" id="IPR004159">
    <property type="entry name" value="Put_SAM_MeTrfase"/>
</dbReference>
<dbReference type="InterPro" id="IPR029063">
    <property type="entry name" value="SAM-dependent_MTases_sf"/>
</dbReference>
<dbReference type="PANTHER" id="PTHR10108:SF1148">
    <property type="entry name" value="METHYLTRANSFERASE PMT23-RELATED"/>
    <property type="match status" value="1"/>
</dbReference>
<dbReference type="PANTHER" id="PTHR10108">
    <property type="entry name" value="SAM-DEPENDENT METHYLTRANSFERASE"/>
    <property type="match status" value="1"/>
</dbReference>
<dbReference type="Pfam" id="PF03141">
    <property type="entry name" value="Methyltransf_29"/>
    <property type="match status" value="1"/>
</dbReference>
<dbReference type="SUPFAM" id="SSF53335">
    <property type="entry name" value="S-adenosyl-L-methionine-dependent methyltransferases"/>
    <property type="match status" value="2"/>
</dbReference>
<gene>
    <name type="ordered locus">At2g40280</name>
    <name type="ORF">T07M07.16</name>
    <name type="ORF">T3G21.5</name>
    <name type="ORF">T7M7.24</name>
</gene>
<proteinExistence type="evidence at transcript level"/>
<name>PMTN_ARATH</name>
<sequence length="589" mass="66773">MAISVQHVVVLLLSTLLIAITFFLFTSDNARFPFPSLSTTDYYTPIPKSPIPHRIVDVSSDQTPQKMKLNTSLEVGELKWDLCKGAESVDYIPCLDNYAAIKQLKSRRHMEHRERHCPEPSPKCLLPLPDNYKPPVPWPKSRDMIWYDNVPHPKLVEYKKEQNWVKKEGEFLVFPGGGTQFKFGVTHYVEFIEKALPSIKWGKNIRVVLDVGCGVASFGGSLLDKDVITMSFAPKDEHEAQIQFALERGIPATLSVIGTQQLTFPSNAFDLIHCARCRVHWDADGGKPLLELNRVLRPGGFFIWSATPVYRDNDRDSRIWNEMVSLTKSICWKVVTKTVDSSGIGLVIYQKPTSESCYNKRSTQDPPLCDKKEANGSWYVPLAKCLSKLPSGNVQSWPELWPKRLVSVKPQSISVKAETLKKDTEKWSASVSDVYLKHLAVNWSTVRNVMDMNAGFGGFAAALINLPLWVMNVVPVDKPDTLSVVYDRGLIGVYHDWCESVNTYPRTYDLLHSSFLLGDLTQRCEIVQVVAEIDRIVRPGGYLVVQDNMETIMKLESILGSLHWSTKIYEDRFLVGRKGFWRPAKPELR</sequence>
<feature type="chain" id="PRO_0000393263" description="Probable methyltransferase PMT23">
    <location>
        <begin position="1"/>
        <end position="589"/>
    </location>
</feature>
<feature type="topological domain" description="Cytoplasmic" evidence="1">
    <location>
        <begin position="1"/>
        <end position="4"/>
    </location>
</feature>
<feature type="transmembrane region" description="Helical; Signal-anchor for type II membrane protein" evidence="1">
    <location>
        <begin position="5"/>
        <end position="25"/>
    </location>
</feature>
<feature type="topological domain" description="Lumenal" evidence="1">
    <location>
        <begin position="26"/>
        <end position="589"/>
    </location>
</feature>
<feature type="glycosylation site" description="N-linked (GlcNAc...) asparagine" evidence="1">
    <location>
        <position position="70"/>
    </location>
</feature>
<feature type="glycosylation site" description="N-linked (GlcNAc...) asparagine" evidence="1">
    <location>
        <position position="375"/>
    </location>
</feature>
<feature type="glycosylation site" description="N-linked (GlcNAc...) asparagine" evidence="1">
    <location>
        <position position="442"/>
    </location>
</feature>
<evidence type="ECO:0000255" key="1"/>
<evidence type="ECO:0000305" key="2"/>
<protein>
    <recommendedName>
        <fullName>Probable methyltransferase PMT23</fullName>
        <ecNumber>2.1.1.-</ecNumber>
    </recommendedName>
</protein>
<reference key="1">
    <citation type="journal article" date="1999" name="Genome Res.">
        <title>A cluster of ABA-regulated genes on Arabidopsis thaliana BAC T07M07.</title>
        <authorList>
            <person name="Wang M.L."/>
            <person name="Belmonte S."/>
            <person name="Kim U."/>
            <person name="Dolan M."/>
            <person name="Morris J.W."/>
            <person name="Goodman H.M."/>
        </authorList>
    </citation>
    <scope>NUCLEOTIDE SEQUENCE [GENOMIC DNA]</scope>
</reference>
<reference key="2">
    <citation type="journal article" date="1999" name="Nature">
        <title>Sequence and analysis of chromosome 2 of the plant Arabidopsis thaliana.</title>
        <authorList>
            <person name="Lin X."/>
            <person name="Kaul S."/>
            <person name="Rounsley S.D."/>
            <person name="Shea T.P."/>
            <person name="Benito M.-I."/>
            <person name="Town C.D."/>
            <person name="Fujii C.Y."/>
            <person name="Mason T.M."/>
            <person name="Bowman C.L."/>
            <person name="Barnstead M.E."/>
            <person name="Feldblyum T.V."/>
            <person name="Buell C.R."/>
            <person name="Ketchum K.A."/>
            <person name="Lee J.J."/>
            <person name="Ronning C.M."/>
            <person name="Koo H.L."/>
            <person name="Moffat K.S."/>
            <person name="Cronin L.A."/>
            <person name="Shen M."/>
            <person name="Pai G."/>
            <person name="Van Aken S."/>
            <person name="Umayam L."/>
            <person name="Tallon L.J."/>
            <person name="Gill J.E."/>
            <person name="Adams M.D."/>
            <person name="Carrera A.J."/>
            <person name="Creasy T.H."/>
            <person name="Goodman H.M."/>
            <person name="Somerville C.R."/>
            <person name="Copenhaver G.P."/>
            <person name="Preuss D."/>
            <person name="Nierman W.C."/>
            <person name="White O."/>
            <person name="Eisen J.A."/>
            <person name="Salzberg S.L."/>
            <person name="Fraser C.M."/>
            <person name="Venter J.C."/>
        </authorList>
    </citation>
    <scope>NUCLEOTIDE SEQUENCE [LARGE SCALE GENOMIC DNA]</scope>
    <source>
        <strain>cv. Columbia</strain>
    </source>
</reference>
<reference key="3">
    <citation type="journal article" date="2017" name="Plant J.">
        <title>Araport11: a complete reannotation of the Arabidopsis thaliana reference genome.</title>
        <authorList>
            <person name="Cheng C.Y."/>
            <person name="Krishnakumar V."/>
            <person name="Chan A.P."/>
            <person name="Thibaud-Nissen F."/>
            <person name="Schobel S."/>
            <person name="Town C.D."/>
        </authorList>
    </citation>
    <scope>GENOME REANNOTATION</scope>
    <source>
        <strain>cv. Columbia</strain>
    </source>
</reference>
<reference key="4">
    <citation type="journal article" date="2003" name="Science">
        <title>Empirical analysis of transcriptional activity in the Arabidopsis genome.</title>
        <authorList>
            <person name="Yamada K."/>
            <person name="Lim J."/>
            <person name="Dale J.M."/>
            <person name="Chen H."/>
            <person name="Shinn P."/>
            <person name="Palm C.J."/>
            <person name="Southwick A.M."/>
            <person name="Wu H.C."/>
            <person name="Kim C.J."/>
            <person name="Nguyen M."/>
            <person name="Pham P.K."/>
            <person name="Cheuk R.F."/>
            <person name="Karlin-Newmann G."/>
            <person name="Liu S.X."/>
            <person name="Lam B."/>
            <person name="Sakano H."/>
            <person name="Wu T."/>
            <person name="Yu G."/>
            <person name="Miranda M."/>
            <person name="Quach H.L."/>
            <person name="Tripp M."/>
            <person name="Chang C.H."/>
            <person name="Lee J.M."/>
            <person name="Toriumi M.J."/>
            <person name="Chan M.M."/>
            <person name="Tang C.C."/>
            <person name="Onodera C.S."/>
            <person name="Deng J.M."/>
            <person name="Akiyama K."/>
            <person name="Ansari Y."/>
            <person name="Arakawa T."/>
            <person name="Banh J."/>
            <person name="Banno F."/>
            <person name="Bowser L."/>
            <person name="Brooks S.Y."/>
            <person name="Carninci P."/>
            <person name="Chao Q."/>
            <person name="Choy N."/>
            <person name="Enju A."/>
            <person name="Goldsmith A.D."/>
            <person name="Gurjal M."/>
            <person name="Hansen N.F."/>
            <person name="Hayashizaki Y."/>
            <person name="Johnson-Hopson C."/>
            <person name="Hsuan V.W."/>
            <person name="Iida K."/>
            <person name="Karnes M."/>
            <person name="Khan S."/>
            <person name="Koesema E."/>
            <person name="Ishida J."/>
            <person name="Jiang P.X."/>
            <person name="Jones T."/>
            <person name="Kawai J."/>
            <person name="Kamiya A."/>
            <person name="Meyers C."/>
            <person name="Nakajima M."/>
            <person name="Narusaka M."/>
            <person name="Seki M."/>
            <person name="Sakurai T."/>
            <person name="Satou M."/>
            <person name="Tamse R."/>
            <person name="Vaysberg M."/>
            <person name="Wallender E.K."/>
            <person name="Wong C."/>
            <person name="Yamamura Y."/>
            <person name="Yuan S."/>
            <person name="Shinozaki K."/>
            <person name="Davis R.W."/>
            <person name="Theologis A."/>
            <person name="Ecker J.R."/>
        </authorList>
    </citation>
    <scope>NUCLEOTIDE SEQUENCE [LARGE SCALE MRNA]</scope>
    <source>
        <strain>cv. Columbia</strain>
    </source>
</reference>
<reference key="5">
    <citation type="journal article" date="2007" name="Plant J.">
        <title>The TUMOROUS SHOOT DEVELOPMENT2 gene of Arabidopsis encoding a putative methyltransferase is required for cell adhesion and co-ordinated plant development.</title>
        <authorList>
            <person name="Krupkova E."/>
            <person name="Immerzeel P."/>
            <person name="Pauly M."/>
            <person name="Schmulling T."/>
        </authorList>
    </citation>
    <scope>GENE FAMILY</scope>
</reference>
<keyword id="KW-0325">Glycoprotein</keyword>
<keyword id="KW-0333">Golgi apparatus</keyword>
<keyword id="KW-0472">Membrane</keyword>
<keyword id="KW-0489">Methyltransferase</keyword>
<keyword id="KW-1185">Reference proteome</keyword>
<keyword id="KW-0735">Signal-anchor</keyword>
<keyword id="KW-0808">Transferase</keyword>
<keyword id="KW-0812">Transmembrane</keyword>
<keyword id="KW-1133">Transmembrane helix</keyword>
<organism>
    <name type="scientific">Arabidopsis thaliana</name>
    <name type="common">Mouse-ear cress</name>
    <dbReference type="NCBI Taxonomy" id="3702"/>
    <lineage>
        <taxon>Eukaryota</taxon>
        <taxon>Viridiplantae</taxon>
        <taxon>Streptophyta</taxon>
        <taxon>Embryophyta</taxon>
        <taxon>Tracheophyta</taxon>
        <taxon>Spermatophyta</taxon>
        <taxon>Magnoliopsida</taxon>
        <taxon>eudicotyledons</taxon>
        <taxon>Gunneridae</taxon>
        <taxon>Pentapetalae</taxon>
        <taxon>rosids</taxon>
        <taxon>malvids</taxon>
        <taxon>Brassicales</taxon>
        <taxon>Brassicaceae</taxon>
        <taxon>Camelineae</taxon>
        <taxon>Arabidopsis</taxon>
    </lineage>
</organism>